<protein>
    <recommendedName>
        <fullName>UPF0758 protein lpp2553</fullName>
    </recommendedName>
</protein>
<dbReference type="EMBL" id="CR628336">
    <property type="protein sequence ID" value="CAH13706.1"/>
    <property type="molecule type" value="Genomic_DNA"/>
</dbReference>
<dbReference type="SMR" id="Q5X240"/>
<dbReference type="KEGG" id="lpp:lpp2553"/>
<dbReference type="LegioList" id="lpp2553"/>
<dbReference type="HOGENOM" id="CLU_073529_0_1_6"/>
<dbReference type="GO" id="GO:0046872">
    <property type="term" value="F:metal ion binding"/>
    <property type="evidence" value="ECO:0007669"/>
    <property type="project" value="UniProtKB-KW"/>
</dbReference>
<dbReference type="GO" id="GO:0008237">
    <property type="term" value="F:metallopeptidase activity"/>
    <property type="evidence" value="ECO:0007669"/>
    <property type="project" value="UniProtKB-KW"/>
</dbReference>
<dbReference type="GO" id="GO:0006508">
    <property type="term" value="P:proteolysis"/>
    <property type="evidence" value="ECO:0007669"/>
    <property type="project" value="UniProtKB-KW"/>
</dbReference>
<dbReference type="CDD" id="cd08071">
    <property type="entry name" value="MPN_DUF2466"/>
    <property type="match status" value="1"/>
</dbReference>
<dbReference type="Gene3D" id="3.40.140.10">
    <property type="entry name" value="Cytidine Deaminase, domain 2"/>
    <property type="match status" value="1"/>
</dbReference>
<dbReference type="InterPro" id="IPR037518">
    <property type="entry name" value="MPN"/>
</dbReference>
<dbReference type="InterPro" id="IPR025657">
    <property type="entry name" value="RadC_JAB"/>
</dbReference>
<dbReference type="InterPro" id="IPR010994">
    <property type="entry name" value="RuvA_2-like"/>
</dbReference>
<dbReference type="InterPro" id="IPR001405">
    <property type="entry name" value="UPF0758"/>
</dbReference>
<dbReference type="InterPro" id="IPR020891">
    <property type="entry name" value="UPF0758_CS"/>
</dbReference>
<dbReference type="InterPro" id="IPR046778">
    <property type="entry name" value="UPF0758_N"/>
</dbReference>
<dbReference type="NCBIfam" id="NF000642">
    <property type="entry name" value="PRK00024.1"/>
    <property type="match status" value="1"/>
</dbReference>
<dbReference type="NCBIfam" id="TIGR00608">
    <property type="entry name" value="radc"/>
    <property type="match status" value="1"/>
</dbReference>
<dbReference type="PANTHER" id="PTHR30471">
    <property type="entry name" value="DNA REPAIR PROTEIN RADC"/>
    <property type="match status" value="1"/>
</dbReference>
<dbReference type="PANTHER" id="PTHR30471:SF3">
    <property type="entry name" value="UPF0758 PROTEIN YEES-RELATED"/>
    <property type="match status" value="1"/>
</dbReference>
<dbReference type="Pfam" id="PF04002">
    <property type="entry name" value="RadC"/>
    <property type="match status" value="1"/>
</dbReference>
<dbReference type="Pfam" id="PF20582">
    <property type="entry name" value="UPF0758_N"/>
    <property type="match status" value="1"/>
</dbReference>
<dbReference type="SUPFAM" id="SSF47781">
    <property type="entry name" value="RuvA domain 2-like"/>
    <property type="match status" value="1"/>
</dbReference>
<dbReference type="PROSITE" id="PS50249">
    <property type="entry name" value="MPN"/>
    <property type="match status" value="1"/>
</dbReference>
<dbReference type="PROSITE" id="PS01302">
    <property type="entry name" value="UPF0758"/>
    <property type="match status" value="1"/>
</dbReference>
<organism>
    <name type="scientific">Legionella pneumophila (strain Paris)</name>
    <dbReference type="NCBI Taxonomy" id="297246"/>
    <lineage>
        <taxon>Bacteria</taxon>
        <taxon>Pseudomonadati</taxon>
        <taxon>Pseudomonadota</taxon>
        <taxon>Gammaproteobacteria</taxon>
        <taxon>Legionellales</taxon>
        <taxon>Legionellaceae</taxon>
        <taxon>Legionella</taxon>
    </lineage>
</organism>
<reference key="1">
    <citation type="journal article" date="2004" name="Nat. Genet.">
        <title>Evidence in the Legionella pneumophila genome for exploitation of host cell functions and high genome plasticity.</title>
        <authorList>
            <person name="Cazalet C."/>
            <person name="Rusniok C."/>
            <person name="Brueggemann H."/>
            <person name="Zidane N."/>
            <person name="Magnier A."/>
            <person name="Ma L."/>
            <person name="Tichit M."/>
            <person name="Jarraud S."/>
            <person name="Bouchier C."/>
            <person name="Vandenesch F."/>
            <person name="Kunst F."/>
            <person name="Etienne J."/>
            <person name="Glaser P."/>
            <person name="Buchrieser C."/>
        </authorList>
    </citation>
    <scope>NUCLEOTIDE SEQUENCE [LARGE SCALE GENOMIC DNA]</scope>
    <source>
        <strain>Paris</strain>
    </source>
</reference>
<sequence>MMVAHTAQQLDLREKLLTNGVHSLSDIELLAIFISSGNNRKSCLQLAYELTKHLGNLRNILNADLQSFKSIHGLGEVRYAQLQAAKEICHRSDFIDLQKEIRLSNTQQTYAFLKKRLRDYKNETFAALFLDNQHRIIAYEELFSGTINTATVYPRPIVERVLQLNAAALILAHNHPSGLSDASQQDLAITERIRDALDLVDARLLDHIVIGDNEVYSIFAENKWVCN</sequence>
<feature type="chain" id="PRO_1000089819" description="UPF0758 protein lpp2553">
    <location>
        <begin position="1"/>
        <end position="227"/>
    </location>
</feature>
<feature type="domain" description="MPN" evidence="1">
    <location>
        <begin position="102"/>
        <end position="225"/>
    </location>
</feature>
<feature type="short sequence motif" description="JAMM motif" evidence="1">
    <location>
        <begin position="173"/>
        <end position="186"/>
    </location>
</feature>
<feature type="binding site" evidence="1">
    <location>
        <position position="173"/>
    </location>
    <ligand>
        <name>Zn(2+)</name>
        <dbReference type="ChEBI" id="CHEBI:29105"/>
        <note>catalytic</note>
    </ligand>
</feature>
<feature type="binding site" evidence="1">
    <location>
        <position position="175"/>
    </location>
    <ligand>
        <name>Zn(2+)</name>
        <dbReference type="ChEBI" id="CHEBI:29105"/>
        <note>catalytic</note>
    </ligand>
</feature>
<feature type="binding site" evidence="1">
    <location>
        <position position="186"/>
    </location>
    <ligand>
        <name>Zn(2+)</name>
        <dbReference type="ChEBI" id="CHEBI:29105"/>
        <note>catalytic</note>
    </ligand>
</feature>
<evidence type="ECO:0000255" key="1">
    <source>
        <dbReference type="PROSITE-ProRule" id="PRU01182"/>
    </source>
</evidence>
<evidence type="ECO:0000305" key="2"/>
<name>Y2553_LEGPA</name>
<keyword id="KW-0378">Hydrolase</keyword>
<keyword id="KW-0479">Metal-binding</keyword>
<keyword id="KW-0482">Metalloprotease</keyword>
<keyword id="KW-0645">Protease</keyword>
<keyword id="KW-0862">Zinc</keyword>
<accession>Q5X240</accession>
<proteinExistence type="inferred from homology"/>
<gene>
    <name type="ordered locus">lpp2553</name>
</gene>
<comment type="similarity">
    <text evidence="2">Belongs to the UPF0758 family.</text>
</comment>